<reference key="1">
    <citation type="submission" date="2005-08" db="EMBL/GenBank/DDBJ databases">
        <authorList>
            <consortium name="NIH - Mammalian Gene Collection (MGC) project"/>
        </authorList>
    </citation>
    <scope>NUCLEOTIDE SEQUENCE [LARGE SCALE MRNA]</scope>
    <source>
        <strain>Crossbred X Angus</strain>
        <tissue>Ileum</tissue>
    </source>
</reference>
<reference key="2">
    <citation type="journal article" date="2001" name="J. Biol. Chem.">
        <title>Structural compensation for the deficit of rRNA with proteins in the mammalian mitochondrial ribosome. Systematic analysis of protein components of the large ribosomal subunit from mammalian mitochondria.</title>
        <authorList>
            <person name="Suzuki T."/>
            <person name="Terasaki M."/>
            <person name="Takemoto-Hori C."/>
            <person name="Hanada T."/>
            <person name="Ueda T."/>
            <person name="Wada A."/>
            <person name="Watanabe K."/>
        </authorList>
    </citation>
    <scope>PROTEIN SEQUENCE OF 30-42</scope>
    <scope>IDENTIFICATION BY MASS SPECTROMETRY</scope>
    <scope>SUBCELLULAR LOCATION</scope>
    <scope>SUBUNIT</scope>
</reference>
<reference evidence="4" key="3">
    <citation type="journal article" date="2006" name="J. Mol. Biol.">
        <title>A structural model for the large subunit of the mammalian mitochondrial ribosome.</title>
        <authorList>
            <person name="Mears J.A."/>
            <person name="Sharma M.R."/>
            <person name="Gutell R.R."/>
            <person name="McCook A.S."/>
            <person name="Richardson P.E."/>
            <person name="Caulfield T.R."/>
            <person name="Agrawal R.K."/>
            <person name="Harvey S.C."/>
        </authorList>
    </citation>
    <scope>STRUCTURE BY ELECTRON MICROSCOPY (12.10 ANGSTROMS) OF 71-188</scope>
    <scope>SUBCELLULAR LOCATION</scope>
    <scope>SUBUNIT</scope>
</reference>
<feature type="transit peptide" description="Mitochondrion" evidence="1">
    <location>
        <begin position="1"/>
        <end position="29"/>
    </location>
</feature>
<feature type="chain" id="PRO_0000239840" description="Large ribosomal subunit protein uL16m">
    <location>
        <begin position="30"/>
        <end position="251"/>
    </location>
</feature>
<sequence length="251" mass="28573">MWRLLSGARAPVLRATLSDSWAAPPARAGLKTLLPVPTFEDVSIPEKPKLRFVERAPLVPKVRREPKNLRDIRGPSTEATEFTEGNFAILALGGGYLHWGHFEMMRLTINRFMDPKNMFALWRVPAPFKAITRKGMGQRMGGGKGAIDHYVTPVKAGRLIVEVGGRCEFQEVQGILNQVAHKLPFPAKAVSRETLEKIQKDQEERERNNQNPWTFERIATANMLGIRKVLSPYDLTHRGRYWGKFYMPERV</sequence>
<organism>
    <name type="scientific">Bos taurus</name>
    <name type="common">Bovine</name>
    <dbReference type="NCBI Taxonomy" id="9913"/>
    <lineage>
        <taxon>Eukaryota</taxon>
        <taxon>Metazoa</taxon>
        <taxon>Chordata</taxon>
        <taxon>Craniata</taxon>
        <taxon>Vertebrata</taxon>
        <taxon>Euteleostomi</taxon>
        <taxon>Mammalia</taxon>
        <taxon>Eutheria</taxon>
        <taxon>Laurasiatheria</taxon>
        <taxon>Artiodactyla</taxon>
        <taxon>Ruminantia</taxon>
        <taxon>Pecora</taxon>
        <taxon>Bovidae</taxon>
        <taxon>Bovinae</taxon>
        <taxon>Bos</taxon>
    </lineage>
</organism>
<protein>
    <recommendedName>
        <fullName evidence="2">Large ribosomal subunit protein uL16m</fullName>
    </recommendedName>
    <alternativeName>
        <fullName>39S ribosomal protein L16, mitochondrial</fullName>
        <shortName>L16mt</shortName>
        <shortName>MRP-L16</shortName>
    </alternativeName>
</protein>
<name>RM16_BOVIN</name>
<accession>Q3T0J3</accession>
<keyword id="KW-0002">3D-structure</keyword>
<keyword id="KW-0903">Direct protein sequencing</keyword>
<keyword id="KW-0496">Mitochondrion</keyword>
<keyword id="KW-1185">Reference proteome</keyword>
<keyword id="KW-0687">Ribonucleoprotein</keyword>
<keyword id="KW-0689">Ribosomal protein</keyword>
<keyword id="KW-0809">Transit peptide</keyword>
<proteinExistence type="evidence at protein level"/>
<gene>
    <name type="primary">MRPL16</name>
</gene>
<evidence type="ECO:0000269" key="1">
    <source>
    </source>
</evidence>
<evidence type="ECO:0000305" key="2"/>
<evidence type="ECO:0000305" key="3">
    <source>
    </source>
</evidence>
<evidence type="ECO:0007744" key="4">
    <source>
        <dbReference type="PDB" id="2FTC"/>
    </source>
</evidence>
<dbReference type="EMBL" id="BC102369">
    <property type="protein sequence ID" value="AAI02370.1"/>
    <property type="molecule type" value="mRNA"/>
</dbReference>
<dbReference type="RefSeq" id="NP_001029813.1">
    <property type="nucleotide sequence ID" value="NM_001034641.2"/>
</dbReference>
<dbReference type="RefSeq" id="XP_015330464.1">
    <property type="nucleotide sequence ID" value="XM_015474978.1"/>
</dbReference>
<dbReference type="PDB" id="2FTC">
    <property type="method" value="EM"/>
    <property type="chains" value="I=71-188"/>
</dbReference>
<dbReference type="PDBsum" id="2FTC"/>
<dbReference type="SMR" id="Q3T0J3"/>
<dbReference type="FunCoup" id="Q3T0J3">
    <property type="interactions" value="1378"/>
</dbReference>
<dbReference type="STRING" id="9913.ENSBTAP00000028236"/>
<dbReference type="PaxDb" id="9913-ENSBTAP00000028236"/>
<dbReference type="Ensembl" id="ENSBTAT00000028236.5">
    <property type="protein sequence ID" value="ENSBTAP00000028236.3"/>
    <property type="gene ID" value="ENSBTAG00000021188.5"/>
</dbReference>
<dbReference type="GeneID" id="538054"/>
<dbReference type="KEGG" id="bta:538054"/>
<dbReference type="CTD" id="54948"/>
<dbReference type="VEuPathDB" id="HostDB:ENSBTAG00000021188"/>
<dbReference type="VGNC" id="VGNC:31620">
    <property type="gene designation" value="MRPL16"/>
</dbReference>
<dbReference type="eggNOG" id="KOG3422">
    <property type="taxonomic scope" value="Eukaryota"/>
</dbReference>
<dbReference type="GeneTree" id="ENSGT00390000002038"/>
<dbReference type="HOGENOM" id="CLU_096518_0_0_1"/>
<dbReference type="InParanoid" id="Q3T0J3"/>
<dbReference type="OMA" id="WGHMEMM"/>
<dbReference type="OrthoDB" id="268521at2759"/>
<dbReference type="TreeFam" id="TF312969"/>
<dbReference type="Reactome" id="R-BTA-5389840">
    <property type="pathway name" value="Mitochondrial translation elongation"/>
</dbReference>
<dbReference type="Reactome" id="R-BTA-5419276">
    <property type="pathway name" value="Mitochondrial translation termination"/>
</dbReference>
<dbReference type="EvolutionaryTrace" id="Q3T0J3"/>
<dbReference type="Proteomes" id="UP000009136">
    <property type="component" value="Chromosome 15"/>
</dbReference>
<dbReference type="Bgee" id="ENSBTAG00000021188">
    <property type="expression patterns" value="Expressed in diaphragm and 109 other cell types or tissues"/>
</dbReference>
<dbReference type="GO" id="GO:0005743">
    <property type="term" value="C:mitochondrial inner membrane"/>
    <property type="evidence" value="ECO:0000304"/>
    <property type="project" value="Reactome"/>
</dbReference>
<dbReference type="GO" id="GO:0005762">
    <property type="term" value="C:mitochondrial large ribosomal subunit"/>
    <property type="evidence" value="ECO:0000250"/>
    <property type="project" value="UniProtKB"/>
</dbReference>
<dbReference type="GO" id="GO:0019843">
    <property type="term" value="F:rRNA binding"/>
    <property type="evidence" value="ECO:0000318"/>
    <property type="project" value="GO_Central"/>
</dbReference>
<dbReference type="GO" id="GO:0003735">
    <property type="term" value="F:structural constituent of ribosome"/>
    <property type="evidence" value="ECO:0000318"/>
    <property type="project" value="GO_Central"/>
</dbReference>
<dbReference type="GO" id="GO:0032543">
    <property type="term" value="P:mitochondrial translation"/>
    <property type="evidence" value="ECO:0000318"/>
    <property type="project" value="GO_Central"/>
</dbReference>
<dbReference type="CDD" id="cd01433">
    <property type="entry name" value="Ribosomal_L16_L10e"/>
    <property type="match status" value="1"/>
</dbReference>
<dbReference type="FunFam" id="3.90.1170.10:FF:000005">
    <property type="entry name" value="39S ribosomal protein L16, mitochondrial"/>
    <property type="match status" value="1"/>
</dbReference>
<dbReference type="Gene3D" id="3.90.1170.10">
    <property type="entry name" value="Ribosomal protein L10e/L16"/>
    <property type="match status" value="1"/>
</dbReference>
<dbReference type="InterPro" id="IPR047873">
    <property type="entry name" value="Ribosomal_uL16"/>
</dbReference>
<dbReference type="InterPro" id="IPR000114">
    <property type="entry name" value="Ribosomal_uL16_bact-type"/>
</dbReference>
<dbReference type="InterPro" id="IPR016180">
    <property type="entry name" value="Ribosomal_uL16_dom"/>
</dbReference>
<dbReference type="InterPro" id="IPR036920">
    <property type="entry name" value="Ribosomal_uL16_sf"/>
</dbReference>
<dbReference type="PANTHER" id="PTHR12220">
    <property type="entry name" value="50S/60S RIBOSOMAL PROTEIN L16"/>
    <property type="match status" value="1"/>
</dbReference>
<dbReference type="PANTHER" id="PTHR12220:SF13">
    <property type="entry name" value="LARGE RIBOSOMAL SUBUNIT PROTEIN UL16M"/>
    <property type="match status" value="1"/>
</dbReference>
<dbReference type="Pfam" id="PF00252">
    <property type="entry name" value="Ribosomal_L16"/>
    <property type="match status" value="1"/>
</dbReference>
<dbReference type="PRINTS" id="PR00060">
    <property type="entry name" value="RIBOSOMALL16"/>
</dbReference>
<dbReference type="SUPFAM" id="SSF54686">
    <property type="entry name" value="Ribosomal protein L16p/L10e"/>
    <property type="match status" value="1"/>
</dbReference>
<comment type="subunit">
    <text evidence="1 3">Component of the mitochondrial ribosome large subunit (39S) which comprises a 16S rRNA and about 50 distinct proteins.</text>
</comment>
<comment type="subcellular location">
    <subcellularLocation>
        <location evidence="1 3">Mitochondrion</location>
    </subcellularLocation>
</comment>
<comment type="similarity">
    <text evidence="2">Belongs to the universal ribosomal protein uL16 family.</text>
</comment>